<proteinExistence type="inferred from homology"/>
<keyword id="KW-0067">ATP-binding</keyword>
<keyword id="KW-0436">Ligase</keyword>
<keyword id="KW-0547">Nucleotide-binding</keyword>
<keyword id="KW-0648">Protein biosynthesis</keyword>
<keyword id="KW-1185">Reference proteome</keyword>
<dbReference type="EC" id="6.3.5.-"/>
<dbReference type="EMBL" id="AE001437">
    <property type="protein sequence ID" value="AAK80618.1"/>
    <property type="status" value="ALT_INIT"/>
    <property type="molecule type" value="Genomic_DNA"/>
</dbReference>
<dbReference type="PIR" id="G97228">
    <property type="entry name" value="G97228"/>
</dbReference>
<dbReference type="RefSeq" id="NP_349278.1">
    <property type="nucleotide sequence ID" value="NC_003030.1"/>
</dbReference>
<dbReference type="SMR" id="P58251"/>
<dbReference type="STRING" id="272562.CA_C2671"/>
<dbReference type="KEGG" id="cac:CA_C2671"/>
<dbReference type="PATRIC" id="fig|272562.8.peg.2861"/>
<dbReference type="eggNOG" id="COG0721">
    <property type="taxonomic scope" value="Bacteria"/>
</dbReference>
<dbReference type="HOGENOM" id="CLU_105899_2_1_9"/>
<dbReference type="OrthoDB" id="9813938at2"/>
<dbReference type="Proteomes" id="UP000000814">
    <property type="component" value="Chromosome"/>
</dbReference>
<dbReference type="GO" id="GO:0050566">
    <property type="term" value="F:asparaginyl-tRNA synthase (glutamine-hydrolyzing) activity"/>
    <property type="evidence" value="ECO:0007669"/>
    <property type="project" value="RHEA"/>
</dbReference>
<dbReference type="GO" id="GO:0005524">
    <property type="term" value="F:ATP binding"/>
    <property type="evidence" value="ECO:0007669"/>
    <property type="project" value="UniProtKB-KW"/>
</dbReference>
<dbReference type="GO" id="GO:0050567">
    <property type="term" value="F:glutaminyl-tRNA synthase (glutamine-hydrolyzing) activity"/>
    <property type="evidence" value="ECO:0007669"/>
    <property type="project" value="UniProtKB-UniRule"/>
</dbReference>
<dbReference type="GO" id="GO:0070681">
    <property type="term" value="P:glutaminyl-tRNAGln biosynthesis via transamidation"/>
    <property type="evidence" value="ECO:0007669"/>
    <property type="project" value="TreeGrafter"/>
</dbReference>
<dbReference type="GO" id="GO:0006450">
    <property type="term" value="P:regulation of translational fidelity"/>
    <property type="evidence" value="ECO:0007669"/>
    <property type="project" value="InterPro"/>
</dbReference>
<dbReference type="GO" id="GO:0006412">
    <property type="term" value="P:translation"/>
    <property type="evidence" value="ECO:0007669"/>
    <property type="project" value="UniProtKB-UniRule"/>
</dbReference>
<dbReference type="Gene3D" id="1.10.20.60">
    <property type="entry name" value="Glu-tRNAGln amidotransferase C subunit, N-terminal domain"/>
    <property type="match status" value="1"/>
</dbReference>
<dbReference type="HAMAP" id="MF_00122">
    <property type="entry name" value="GatC"/>
    <property type="match status" value="1"/>
</dbReference>
<dbReference type="InterPro" id="IPR036113">
    <property type="entry name" value="Asp/Glu-ADT_sf_sub_c"/>
</dbReference>
<dbReference type="InterPro" id="IPR003837">
    <property type="entry name" value="GatC"/>
</dbReference>
<dbReference type="NCBIfam" id="TIGR00135">
    <property type="entry name" value="gatC"/>
    <property type="match status" value="1"/>
</dbReference>
<dbReference type="PANTHER" id="PTHR15004">
    <property type="entry name" value="GLUTAMYL-TRNA(GLN) AMIDOTRANSFERASE SUBUNIT C, MITOCHONDRIAL"/>
    <property type="match status" value="1"/>
</dbReference>
<dbReference type="PANTHER" id="PTHR15004:SF0">
    <property type="entry name" value="GLUTAMYL-TRNA(GLN) AMIDOTRANSFERASE SUBUNIT C, MITOCHONDRIAL"/>
    <property type="match status" value="1"/>
</dbReference>
<dbReference type="Pfam" id="PF02686">
    <property type="entry name" value="GatC"/>
    <property type="match status" value="1"/>
</dbReference>
<dbReference type="SUPFAM" id="SSF141000">
    <property type="entry name" value="Glu-tRNAGln amidotransferase C subunit"/>
    <property type="match status" value="1"/>
</dbReference>
<sequence>MSVSKKDVEYVAELARLSFSEEQKEGFMEDLNSILGYVDKLSELDTDNVDIIVNPYYIENKFREDEVEESMDLKDVIKNAPKNLEEYIVVPKIID</sequence>
<protein>
    <recommendedName>
        <fullName>Glutamyl-tRNA(Gln) amidotransferase subunit C 1</fullName>
        <shortName>Glu-ADT subunit C 1</shortName>
        <ecNumber>6.3.5.-</ecNumber>
    </recommendedName>
</protein>
<reference key="1">
    <citation type="journal article" date="2001" name="J. Bacteriol.">
        <title>Genome sequence and comparative analysis of the solvent-producing bacterium Clostridium acetobutylicum.</title>
        <authorList>
            <person name="Noelling J."/>
            <person name="Breton G."/>
            <person name="Omelchenko M.V."/>
            <person name="Makarova K.S."/>
            <person name="Zeng Q."/>
            <person name="Gibson R."/>
            <person name="Lee H.M."/>
            <person name="Dubois J."/>
            <person name="Qiu D."/>
            <person name="Hitti J."/>
            <person name="Wolf Y.I."/>
            <person name="Tatusov R.L."/>
            <person name="Sabathe F."/>
            <person name="Doucette-Stamm L.A."/>
            <person name="Soucaille P."/>
            <person name="Daly M.J."/>
            <person name="Bennett G.N."/>
            <person name="Koonin E.V."/>
            <person name="Smith D.R."/>
        </authorList>
    </citation>
    <scope>NUCLEOTIDE SEQUENCE [LARGE SCALE GENOMIC DNA]</scope>
    <source>
        <strain>ATCC 824 / DSM 792 / JCM 1419 / IAM 19013 / LMG 5710 / NBRC 13948 / NRRL B-527 / VKM B-1787 / 2291 / W</strain>
    </source>
</reference>
<gene>
    <name type="primary">gatC1</name>
    <name type="ordered locus">CA_C2671</name>
</gene>
<comment type="function">
    <text evidence="1">Allows the formation of correctly charged Asn-tRNA(Asn) or Gln-tRNA(Gln) through the transamidation of misacylated Asp-tRNA(Asn) or Glu-tRNA(Gln) in organisms which lack either or both of asparaginyl-tRNA or glutaminyl-tRNA synthetases. The reaction takes place in the presence of glutamine and ATP through an activated phospho-Asp-tRNA(Asn) or phospho-Glu-tRNA(Gln) (By similarity).</text>
</comment>
<comment type="catalytic activity">
    <reaction>
        <text>L-glutamyl-tRNA(Gln) + L-glutamine + ATP + H2O = L-glutaminyl-tRNA(Gln) + L-glutamate + ADP + phosphate + H(+)</text>
        <dbReference type="Rhea" id="RHEA:17521"/>
        <dbReference type="Rhea" id="RHEA-COMP:9681"/>
        <dbReference type="Rhea" id="RHEA-COMP:9684"/>
        <dbReference type="ChEBI" id="CHEBI:15377"/>
        <dbReference type="ChEBI" id="CHEBI:15378"/>
        <dbReference type="ChEBI" id="CHEBI:29985"/>
        <dbReference type="ChEBI" id="CHEBI:30616"/>
        <dbReference type="ChEBI" id="CHEBI:43474"/>
        <dbReference type="ChEBI" id="CHEBI:58359"/>
        <dbReference type="ChEBI" id="CHEBI:78520"/>
        <dbReference type="ChEBI" id="CHEBI:78521"/>
        <dbReference type="ChEBI" id="CHEBI:456216"/>
    </reaction>
</comment>
<comment type="catalytic activity">
    <reaction>
        <text>L-aspartyl-tRNA(Asn) + L-glutamine + ATP + H2O = L-asparaginyl-tRNA(Asn) + L-glutamate + ADP + phosphate + 2 H(+)</text>
        <dbReference type="Rhea" id="RHEA:14513"/>
        <dbReference type="Rhea" id="RHEA-COMP:9674"/>
        <dbReference type="Rhea" id="RHEA-COMP:9677"/>
        <dbReference type="ChEBI" id="CHEBI:15377"/>
        <dbReference type="ChEBI" id="CHEBI:15378"/>
        <dbReference type="ChEBI" id="CHEBI:29985"/>
        <dbReference type="ChEBI" id="CHEBI:30616"/>
        <dbReference type="ChEBI" id="CHEBI:43474"/>
        <dbReference type="ChEBI" id="CHEBI:58359"/>
        <dbReference type="ChEBI" id="CHEBI:78515"/>
        <dbReference type="ChEBI" id="CHEBI:78516"/>
        <dbReference type="ChEBI" id="CHEBI:456216"/>
    </reaction>
</comment>
<comment type="subunit">
    <text evidence="1">Heterotrimer of A, B and C subunits.</text>
</comment>
<comment type="similarity">
    <text evidence="2">Belongs to the GatC family.</text>
</comment>
<comment type="sequence caution" evidence="2">
    <conflict type="erroneous initiation">
        <sequence resource="EMBL-CDS" id="AAK80618"/>
    </conflict>
</comment>
<accession>P58251</accession>
<evidence type="ECO:0000250" key="1"/>
<evidence type="ECO:0000305" key="2"/>
<name>GATC1_CLOAB</name>
<feature type="chain" id="PRO_0000105293" description="Glutamyl-tRNA(Gln) amidotransferase subunit C 1">
    <location>
        <begin position="1"/>
        <end position="95"/>
    </location>
</feature>
<organism>
    <name type="scientific">Clostridium acetobutylicum (strain ATCC 824 / DSM 792 / JCM 1419 / IAM 19013 / LMG 5710 / NBRC 13948 / NRRL B-527 / VKM B-1787 / 2291 / W)</name>
    <dbReference type="NCBI Taxonomy" id="272562"/>
    <lineage>
        <taxon>Bacteria</taxon>
        <taxon>Bacillati</taxon>
        <taxon>Bacillota</taxon>
        <taxon>Clostridia</taxon>
        <taxon>Eubacteriales</taxon>
        <taxon>Clostridiaceae</taxon>
        <taxon>Clostridium</taxon>
    </lineage>
</organism>